<sequence>MFGKGGLGNLMKQAQQMQEKMQKMQEEIAQLEVTGESGAGLVKVTINGAHNCRRVEIDPSLLEDDKEMLEDLVAAAFNDAARRIEETQKEKMASVSSGMQLPPGFKMPF</sequence>
<organism>
    <name type="scientific">Escherichia coli O6:H1 (strain CFT073 / ATCC 700928 / UPEC)</name>
    <dbReference type="NCBI Taxonomy" id="199310"/>
    <lineage>
        <taxon>Bacteria</taxon>
        <taxon>Pseudomonadati</taxon>
        <taxon>Pseudomonadota</taxon>
        <taxon>Gammaproteobacteria</taxon>
        <taxon>Enterobacterales</taxon>
        <taxon>Enterobacteriaceae</taxon>
        <taxon>Escherichia</taxon>
    </lineage>
</organism>
<keyword id="KW-0963">Cytoplasm</keyword>
<keyword id="KW-0238">DNA-binding</keyword>
<keyword id="KW-1185">Reference proteome</keyword>
<accession>P0A8B6</accession>
<accession>P09994</accession>
<accession>P17577</accession>
<evidence type="ECO:0000255" key="1">
    <source>
        <dbReference type="HAMAP-Rule" id="MF_00274"/>
    </source>
</evidence>
<evidence type="ECO:0000305" key="2"/>
<comment type="function">
    <text evidence="1">Binds to DNA and alters its conformation. May be involved in regulation of gene expression, nucleoid organization and DNA protection.</text>
</comment>
<comment type="subunit">
    <text evidence="1">Homodimer.</text>
</comment>
<comment type="subcellular location">
    <subcellularLocation>
        <location evidence="1">Cytoplasm</location>
        <location evidence="1">Nucleoid</location>
    </subcellularLocation>
</comment>
<comment type="similarity">
    <text evidence="1">Belongs to the YbaB/EbfC family.</text>
</comment>
<comment type="sequence caution" evidence="2">
    <conflict type="erroneous initiation">
        <sequence resource="EMBL-CDS" id="AAN79069"/>
    </conflict>
</comment>
<gene>
    <name evidence="1" type="primary">ybaB</name>
    <name type="ordered locus">c0591</name>
</gene>
<dbReference type="EMBL" id="AE014075">
    <property type="protein sequence ID" value="AAN79069.1"/>
    <property type="status" value="ALT_INIT"/>
    <property type="molecule type" value="Genomic_DNA"/>
</dbReference>
<dbReference type="RefSeq" id="WP_000467098.1">
    <property type="nucleotide sequence ID" value="NZ_CP051263.1"/>
</dbReference>
<dbReference type="SMR" id="P0A8B6"/>
<dbReference type="STRING" id="199310.c0591"/>
<dbReference type="KEGG" id="ecc:c0591"/>
<dbReference type="eggNOG" id="COG0718">
    <property type="taxonomic scope" value="Bacteria"/>
</dbReference>
<dbReference type="HOGENOM" id="CLU_140930_0_0_6"/>
<dbReference type="Proteomes" id="UP000001410">
    <property type="component" value="Chromosome"/>
</dbReference>
<dbReference type="GO" id="GO:0043590">
    <property type="term" value="C:bacterial nucleoid"/>
    <property type="evidence" value="ECO:0007669"/>
    <property type="project" value="UniProtKB-UniRule"/>
</dbReference>
<dbReference type="GO" id="GO:0005829">
    <property type="term" value="C:cytosol"/>
    <property type="evidence" value="ECO:0007669"/>
    <property type="project" value="TreeGrafter"/>
</dbReference>
<dbReference type="GO" id="GO:0003677">
    <property type="term" value="F:DNA binding"/>
    <property type="evidence" value="ECO:0007669"/>
    <property type="project" value="UniProtKB-UniRule"/>
</dbReference>
<dbReference type="FunFam" id="3.30.1310.10:FF:000001">
    <property type="entry name" value="Nucleoid-associated protein YbaB"/>
    <property type="match status" value="1"/>
</dbReference>
<dbReference type="Gene3D" id="3.30.1310.10">
    <property type="entry name" value="Nucleoid-associated protein YbaB-like domain"/>
    <property type="match status" value="1"/>
</dbReference>
<dbReference type="HAMAP" id="MF_00274">
    <property type="entry name" value="DNA_YbaB_EbfC"/>
    <property type="match status" value="1"/>
</dbReference>
<dbReference type="InterPro" id="IPR036894">
    <property type="entry name" value="YbaB-like_sf"/>
</dbReference>
<dbReference type="InterPro" id="IPR004401">
    <property type="entry name" value="YbaB/EbfC"/>
</dbReference>
<dbReference type="NCBIfam" id="TIGR00103">
    <property type="entry name" value="DNA_YbaB_EbfC"/>
    <property type="match status" value="1"/>
</dbReference>
<dbReference type="PANTHER" id="PTHR33449">
    <property type="entry name" value="NUCLEOID-ASSOCIATED PROTEIN YBAB"/>
    <property type="match status" value="1"/>
</dbReference>
<dbReference type="PANTHER" id="PTHR33449:SF1">
    <property type="entry name" value="NUCLEOID-ASSOCIATED PROTEIN YBAB"/>
    <property type="match status" value="1"/>
</dbReference>
<dbReference type="Pfam" id="PF02575">
    <property type="entry name" value="YbaB_DNA_bd"/>
    <property type="match status" value="1"/>
</dbReference>
<dbReference type="PIRSF" id="PIRSF004555">
    <property type="entry name" value="UCP004555"/>
    <property type="match status" value="1"/>
</dbReference>
<dbReference type="SUPFAM" id="SSF82607">
    <property type="entry name" value="YbaB-like"/>
    <property type="match status" value="1"/>
</dbReference>
<feature type="chain" id="PRO_0000170392" description="Nucleoid-associated protein YbaB">
    <location>
        <begin position="1"/>
        <end position="109"/>
    </location>
</feature>
<reference key="1">
    <citation type="journal article" date="2002" name="Proc. Natl. Acad. Sci. U.S.A.">
        <title>Extensive mosaic structure revealed by the complete genome sequence of uropathogenic Escherichia coli.</title>
        <authorList>
            <person name="Welch R.A."/>
            <person name="Burland V."/>
            <person name="Plunkett G. III"/>
            <person name="Redford P."/>
            <person name="Roesch P."/>
            <person name="Rasko D."/>
            <person name="Buckles E.L."/>
            <person name="Liou S.-R."/>
            <person name="Boutin A."/>
            <person name="Hackett J."/>
            <person name="Stroud D."/>
            <person name="Mayhew G.F."/>
            <person name="Rose D.J."/>
            <person name="Zhou S."/>
            <person name="Schwartz D.C."/>
            <person name="Perna N.T."/>
            <person name="Mobley H.L.T."/>
            <person name="Donnenberg M.S."/>
            <person name="Blattner F.R."/>
        </authorList>
    </citation>
    <scope>NUCLEOTIDE SEQUENCE [LARGE SCALE GENOMIC DNA]</scope>
    <source>
        <strain>CFT073 / ATCC 700928 / UPEC</strain>
    </source>
</reference>
<protein>
    <recommendedName>
        <fullName evidence="1">Nucleoid-associated protein YbaB</fullName>
    </recommendedName>
</protein>
<proteinExistence type="inferred from homology"/>
<name>YBAB_ECOL6</name>